<proteinExistence type="evidence at transcript level"/>
<gene>
    <name type="primary">golim4</name>
    <name type="synonym">golph4</name>
</gene>
<evidence type="ECO:0000250" key="1"/>
<evidence type="ECO:0000255" key="2"/>
<evidence type="ECO:0000256" key="3">
    <source>
        <dbReference type="SAM" id="MobiDB-lite"/>
    </source>
</evidence>
<evidence type="ECO:0000305" key="4"/>
<organism>
    <name type="scientific">Xenopus tropicalis</name>
    <name type="common">Western clawed frog</name>
    <name type="synonym">Silurana tropicalis</name>
    <dbReference type="NCBI Taxonomy" id="8364"/>
    <lineage>
        <taxon>Eukaryota</taxon>
        <taxon>Metazoa</taxon>
        <taxon>Chordata</taxon>
        <taxon>Craniata</taxon>
        <taxon>Vertebrata</taxon>
        <taxon>Euteleostomi</taxon>
        <taxon>Amphibia</taxon>
        <taxon>Batrachia</taxon>
        <taxon>Anura</taxon>
        <taxon>Pipoidea</taxon>
        <taxon>Pipidae</taxon>
        <taxon>Xenopodinae</taxon>
        <taxon>Xenopus</taxon>
        <taxon>Silurana</taxon>
    </lineage>
</organism>
<name>GOLI4_XENTR</name>
<reference key="1">
    <citation type="submission" date="2006-09" db="EMBL/GenBank/DDBJ databases">
        <authorList>
            <consortium name="NIH - Xenopus Gene Collection (XGC) project"/>
        </authorList>
    </citation>
    <scope>NUCLEOTIDE SEQUENCE [LARGE SCALE MRNA]</scope>
    <source>
        <strain>N6</strain>
        <tissue>Lung</tissue>
    </source>
</reference>
<protein>
    <recommendedName>
        <fullName>Golgi integral membrane protein 4</fullName>
    </recommendedName>
    <alternativeName>
        <fullName>Golgi phosphoprotein 4</fullName>
    </alternativeName>
</protein>
<dbReference type="EMBL" id="BC123987">
    <property type="protein sequence ID" value="AAI23988.1"/>
    <property type="status" value="ALT_INIT"/>
    <property type="molecule type" value="mRNA"/>
</dbReference>
<dbReference type="RefSeq" id="NP_001072668.2">
    <property type="nucleotide sequence ID" value="NM_001079200.1"/>
</dbReference>
<dbReference type="SMR" id="Q08D19"/>
<dbReference type="FunCoup" id="Q08D19">
    <property type="interactions" value="1784"/>
</dbReference>
<dbReference type="STRING" id="8364.ENSXETP00000043967"/>
<dbReference type="PaxDb" id="8364-ENSXETP00000049430"/>
<dbReference type="DNASU" id="780125"/>
<dbReference type="GeneID" id="780125"/>
<dbReference type="KEGG" id="xtr:780125"/>
<dbReference type="AGR" id="Xenbase:XB-GENE-980151"/>
<dbReference type="CTD" id="27333"/>
<dbReference type="Xenbase" id="XB-GENE-980151">
    <property type="gene designation" value="golim4"/>
</dbReference>
<dbReference type="InParanoid" id="Q08D19"/>
<dbReference type="OrthoDB" id="6288648at2759"/>
<dbReference type="Proteomes" id="UP000008143">
    <property type="component" value="Chromosome 5"/>
</dbReference>
<dbReference type="GO" id="GO:0010008">
    <property type="term" value="C:endosome membrane"/>
    <property type="evidence" value="ECO:0007669"/>
    <property type="project" value="UniProtKB-SubCell"/>
</dbReference>
<dbReference type="GO" id="GO:0032580">
    <property type="term" value="C:Golgi cisterna membrane"/>
    <property type="evidence" value="ECO:0007669"/>
    <property type="project" value="UniProtKB-SubCell"/>
</dbReference>
<dbReference type="GO" id="GO:0000139">
    <property type="term" value="C:Golgi membrane"/>
    <property type="evidence" value="ECO:0007669"/>
    <property type="project" value="InterPro"/>
</dbReference>
<dbReference type="InterPro" id="IPR042336">
    <property type="entry name" value="GOLIM4"/>
</dbReference>
<dbReference type="PANTHER" id="PTHR22909">
    <property type="entry name" value="GOLGI INTEGRAL MEMBRANE PROTEIN 4"/>
    <property type="match status" value="1"/>
</dbReference>
<dbReference type="PANTHER" id="PTHR22909:SF22">
    <property type="entry name" value="GOLGI INTEGRAL MEMBRANE PROTEIN 4"/>
    <property type="match status" value="1"/>
</dbReference>
<sequence>MGNGMCSRRQKRIFQALACLAVAIGFVYGAMLNYHLQNDLKKAEAVALKYQQHHESMSAQLQVVYEHRSRLEKSLQKERLEHKKAKEDFLVYKLEAQETLNKGRQDSNNRYNALGVQHEMLKSQHEELRKQHNELQGEHQKLGEDLTRTYSNHKEKYLLLQQEKEQEHSKLKESIYNLREENKQLRKAHQDVHLQLQDVKSQVEEYVQLKKALNKMSSLRQPEKDTVPIGRNNSPTIAPTQEHATEQELMTNVQTRQVVDHDIIIRSSTAANDEAVHLNRVKTNLDKPDEDTVPLPEAEAATEHPVEVEEEHKKELEEEEMEQVGKPERLVEEQDQVQEEQEQHKPEEDDALEGNNEEQKEEETNNMQGNKHTERDPTLKPHSKYKSAYEEQLEQQQLAARQMEEARHLKEQQDLLHQQRLKEHILRQQQLHENDIELQRQNKYKEEQLAEKLRKQAEYENVDHDIVQGEEEQPIQQEEAAYERDNHQDEAEDVDAANNANEEQALDQEAESREGQEKAAAEDVNPADDPNNQGEDEFEEAEQEREENLPDENEAQRQQQEHPEVQEHLAMAGNPDQQEDNIDQQYQEEEEEERQIGAEREPDAQQEENKERNEENYEEEEEEEDGAAGVKNKRRAEM</sequence>
<accession>Q08D19</accession>
<keyword id="KW-0175">Coiled coil</keyword>
<keyword id="KW-0967">Endosome</keyword>
<keyword id="KW-0333">Golgi apparatus</keyword>
<keyword id="KW-0472">Membrane</keyword>
<keyword id="KW-1185">Reference proteome</keyword>
<keyword id="KW-0735">Signal-anchor</keyword>
<keyword id="KW-0812">Transmembrane</keyword>
<keyword id="KW-1133">Transmembrane helix</keyword>
<keyword id="KW-0813">Transport</keyword>
<feature type="chain" id="PRO_0000285100" description="Golgi integral membrane protein 4">
    <location>
        <begin position="1"/>
        <end position="638"/>
    </location>
</feature>
<feature type="topological domain" description="Cytoplasmic" evidence="2">
    <location>
        <begin position="1"/>
        <end position="12"/>
    </location>
</feature>
<feature type="transmembrane region" description="Helical; Signal-anchor for type II membrane protein" evidence="2">
    <location>
        <begin position="13"/>
        <end position="33"/>
    </location>
</feature>
<feature type="topological domain" description="Lumenal" evidence="2">
    <location>
        <begin position="34"/>
        <end position="638"/>
    </location>
</feature>
<feature type="region of interest" description="Golgi targeting" evidence="1">
    <location>
        <begin position="38"/>
        <end position="107"/>
    </location>
</feature>
<feature type="region of interest" description="Endosome targeting" evidence="1">
    <location>
        <begin position="80"/>
        <end position="175"/>
    </location>
</feature>
<feature type="region of interest" description="Golgi targeting" evidence="1">
    <location>
        <begin position="176"/>
        <end position="220"/>
    </location>
</feature>
<feature type="region of interest" description="Disordered" evidence="3">
    <location>
        <begin position="217"/>
        <end position="245"/>
    </location>
</feature>
<feature type="region of interest" description="Disordered" evidence="3">
    <location>
        <begin position="280"/>
        <end position="415"/>
    </location>
</feature>
<feature type="region of interest" description="Disordered" evidence="3">
    <location>
        <begin position="455"/>
        <end position="638"/>
    </location>
</feature>
<feature type="coiled-coil region" evidence="2">
    <location>
        <begin position="66"/>
        <end position="216"/>
    </location>
</feature>
<feature type="compositionally biased region" description="Basic and acidic residues" evidence="3">
    <location>
        <begin position="301"/>
        <end position="316"/>
    </location>
</feature>
<feature type="compositionally biased region" description="Basic and acidic residues" evidence="3">
    <location>
        <begin position="323"/>
        <end position="332"/>
    </location>
</feature>
<feature type="compositionally biased region" description="Acidic residues" evidence="3">
    <location>
        <begin position="348"/>
        <end position="361"/>
    </location>
</feature>
<feature type="compositionally biased region" description="Basic and acidic residues" evidence="3">
    <location>
        <begin position="402"/>
        <end position="414"/>
    </location>
</feature>
<feature type="compositionally biased region" description="Basic and acidic residues" evidence="3">
    <location>
        <begin position="455"/>
        <end position="467"/>
    </location>
</feature>
<feature type="compositionally biased region" description="Basic and acidic residues" evidence="3">
    <location>
        <begin position="510"/>
        <end position="521"/>
    </location>
</feature>
<feature type="compositionally biased region" description="Acidic residues" evidence="3">
    <location>
        <begin position="534"/>
        <end position="553"/>
    </location>
</feature>
<feature type="compositionally biased region" description="Acidic residues" evidence="3">
    <location>
        <begin position="577"/>
        <end position="593"/>
    </location>
</feature>
<feature type="compositionally biased region" description="Basic and acidic residues" evidence="3">
    <location>
        <begin position="594"/>
        <end position="615"/>
    </location>
</feature>
<feature type="compositionally biased region" description="Acidic residues" evidence="3">
    <location>
        <begin position="616"/>
        <end position="626"/>
    </location>
</feature>
<comment type="function">
    <text evidence="1">May play a role in endosome to Golgi protein trafficking.</text>
</comment>
<comment type="subcellular location">
    <subcellularLocation>
        <location evidence="1">Golgi apparatus</location>
        <location evidence="1">Golgi stack membrane</location>
        <topology evidence="1">Single-pass type II membrane protein</topology>
    </subcellularLocation>
    <subcellularLocation>
        <location evidence="1">Endosome membrane</location>
        <topology evidence="1">Single-pass type II membrane protein</topology>
    </subcellularLocation>
    <text evidence="1">Localizes to cis and medial Golgi cisternae. Probably cycles between early Golgi and distal compartments like endosome (By similarity).</text>
</comment>
<comment type="similarity">
    <text evidence="4">Belongs to the GOLIM4 family.</text>
</comment>
<comment type="sequence caution" evidence="4">
    <conflict type="erroneous initiation">
        <sequence resource="EMBL-CDS" id="AAI23988"/>
    </conflict>
</comment>